<dbReference type="EMBL" id="CP000057">
    <property type="protein sequence ID" value="AAX88227.1"/>
    <property type="molecule type" value="Genomic_DNA"/>
</dbReference>
<dbReference type="RefSeq" id="WP_005660510.1">
    <property type="nucleotide sequence ID" value="NC_007146.2"/>
</dbReference>
<dbReference type="SMR" id="Q4QL70"/>
<dbReference type="KEGG" id="hit:NTHI1404"/>
<dbReference type="HOGENOM" id="CLU_037628_6_1_6"/>
<dbReference type="UniPathway" id="UPA00488"/>
<dbReference type="Proteomes" id="UP000002525">
    <property type="component" value="Chromosome"/>
</dbReference>
<dbReference type="GO" id="GO:0003700">
    <property type="term" value="F:DNA-binding transcription factor activity"/>
    <property type="evidence" value="ECO:0007669"/>
    <property type="project" value="TreeGrafter"/>
</dbReference>
<dbReference type="GO" id="GO:0000976">
    <property type="term" value="F:transcription cis-regulatory region binding"/>
    <property type="evidence" value="ECO:0007669"/>
    <property type="project" value="TreeGrafter"/>
</dbReference>
<dbReference type="GO" id="GO:0045892">
    <property type="term" value="P:negative regulation of DNA-templated transcription"/>
    <property type="evidence" value="ECO:0007669"/>
    <property type="project" value="UniProtKB-UniRule"/>
</dbReference>
<dbReference type="GO" id="GO:0006164">
    <property type="term" value="P:purine nucleotide biosynthetic process"/>
    <property type="evidence" value="ECO:0007669"/>
    <property type="project" value="UniProtKB-UniPathway"/>
</dbReference>
<dbReference type="CDD" id="cd01392">
    <property type="entry name" value="HTH_LacI"/>
    <property type="match status" value="1"/>
</dbReference>
<dbReference type="CDD" id="cd06275">
    <property type="entry name" value="PBP1_PurR"/>
    <property type="match status" value="1"/>
</dbReference>
<dbReference type="FunFam" id="1.10.260.40:FF:000002">
    <property type="entry name" value="HTH-type transcriptional repressor PurR"/>
    <property type="match status" value="1"/>
</dbReference>
<dbReference type="Gene3D" id="3.40.50.2300">
    <property type="match status" value="2"/>
</dbReference>
<dbReference type="Gene3D" id="1.10.260.40">
    <property type="entry name" value="lambda repressor-like DNA-binding domains"/>
    <property type="match status" value="1"/>
</dbReference>
<dbReference type="HAMAP" id="MF_01277">
    <property type="entry name" value="HTH_type_PurR"/>
    <property type="match status" value="1"/>
</dbReference>
<dbReference type="InterPro" id="IPR000843">
    <property type="entry name" value="HTH_LacI"/>
</dbReference>
<dbReference type="InterPro" id="IPR046335">
    <property type="entry name" value="LacI/GalR-like_sensor"/>
</dbReference>
<dbReference type="InterPro" id="IPR010982">
    <property type="entry name" value="Lambda_DNA-bd_dom_sf"/>
</dbReference>
<dbReference type="InterPro" id="IPR028082">
    <property type="entry name" value="Peripla_BP_I"/>
</dbReference>
<dbReference type="InterPro" id="IPR023588">
    <property type="entry name" value="Tscrpt_reg_HTH_PurR"/>
</dbReference>
<dbReference type="NCBIfam" id="NF007979">
    <property type="entry name" value="PRK10703.1"/>
    <property type="match status" value="1"/>
</dbReference>
<dbReference type="PANTHER" id="PTHR30146:SF148">
    <property type="entry name" value="HTH-TYPE TRANSCRIPTIONAL REPRESSOR PURR-RELATED"/>
    <property type="match status" value="1"/>
</dbReference>
<dbReference type="PANTHER" id="PTHR30146">
    <property type="entry name" value="LACI-RELATED TRANSCRIPTIONAL REPRESSOR"/>
    <property type="match status" value="1"/>
</dbReference>
<dbReference type="Pfam" id="PF00356">
    <property type="entry name" value="LacI"/>
    <property type="match status" value="1"/>
</dbReference>
<dbReference type="Pfam" id="PF13377">
    <property type="entry name" value="Peripla_BP_3"/>
    <property type="match status" value="1"/>
</dbReference>
<dbReference type="PRINTS" id="PR00036">
    <property type="entry name" value="HTHLACI"/>
</dbReference>
<dbReference type="SMART" id="SM00354">
    <property type="entry name" value="HTH_LACI"/>
    <property type="match status" value="1"/>
</dbReference>
<dbReference type="SUPFAM" id="SSF47413">
    <property type="entry name" value="lambda repressor-like DNA-binding domains"/>
    <property type="match status" value="1"/>
</dbReference>
<dbReference type="SUPFAM" id="SSF53822">
    <property type="entry name" value="Periplasmic binding protein-like I"/>
    <property type="match status" value="1"/>
</dbReference>
<dbReference type="PROSITE" id="PS00356">
    <property type="entry name" value="HTH_LACI_1"/>
    <property type="match status" value="1"/>
</dbReference>
<dbReference type="PROSITE" id="PS50932">
    <property type="entry name" value="HTH_LACI_2"/>
    <property type="match status" value="1"/>
</dbReference>
<proteinExistence type="inferred from homology"/>
<feature type="chain" id="PRO_0000279660" description="HTH-type transcriptional repressor PurR">
    <location>
        <begin position="1"/>
        <end position="336"/>
    </location>
</feature>
<feature type="domain" description="HTH lacI-type" evidence="1">
    <location>
        <begin position="2"/>
        <end position="56"/>
    </location>
</feature>
<feature type="DNA-binding region" description="H-T-H motif" evidence="1">
    <location>
        <begin position="4"/>
        <end position="23"/>
    </location>
</feature>
<feature type="DNA-binding region" evidence="1">
    <location>
        <begin position="48"/>
        <end position="56"/>
    </location>
</feature>
<feature type="binding site" evidence="1">
    <location>
        <position position="73"/>
    </location>
    <ligand>
        <name>hypoxanthine</name>
        <dbReference type="ChEBI" id="CHEBI:17368"/>
    </ligand>
</feature>
<feature type="binding site" evidence="1">
    <location>
        <position position="188"/>
    </location>
    <ligand>
        <name>hypoxanthine</name>
        <dbReference type="ChEBI" id="CHEBI:17368"/>
    </ligand>
</feature>
<feature type="binding site" evidence="1">
    <location>
        <position position="190"/>
    </location>
    <ligand>
        <name>hypoxanthine</name>
        <dbReference type="ChEBI" id="CHEBI:17368"/>
    </ligand>
</feature>
<feature type="binding site" evidence="1">
    <location>
        <position position="219"/>
    </location>
    <ligand>
        <name>hypoxanthine</name>
        <dbReference type="ChEBI" id="CHEBI:17368"/>
    </ligand>
</feature>
<feature type="binding site" evidence="1">
    <location>
        <position position="273"/>
    </location>
    <ligand>
        <name>hypoxanthine</name>
        <dbReference type="ChEBI" id="CHEBI:17368"/>
    </ligand>
</feature>
<protein>
    <recommendedName>
        <fullName evidence="1">HTH-type transcriptional repressor PurR</fullName>
    </recommendedName>
    <alternativeName>
        <fullName evidence="1">Pur regulon repressor</fullName>
    </alternativeName>
    <alternativeName>
        <fullName evidence="1">Purine nucleotide synthesis repressor</fullName>
    </alternativeName>
</protein>
<evidence type="ECO:0000255" key="1">
    <source>
        <dbReference type="HAMAP-Rule" id="MF_01277"/>
    </source>
</evidence>
<accession>Q4QL70</accession>
<sequence>MATIKDVAKMAGVSTTTVSHVINKTRFVAKDTEEAVLSAIKQLNYSPSAVARSLKVNTTKSIGMIVTTSEAPYFAEIIHSVEEHCYRQGYSLFLCNTQNDPEKVKNHLEMLAKKRVDGLLVMCSEYTQDSLDLLSSFSTIPMVVMDWGPNANTDVIDDHSFDGGYLATKHLIECGHKKIGIICGELNKTTARTRYEGFEKAMEEAKLTINPSWVLEGAFEPEDGYECMNRLLTQEELPTALFCCNDVMALGAISALTEKGLRVPEDMSIIGYDDIHASRFYAPPLTTIHQSKLRLGRQAVNILLERITHKDEGVQQYSRIDITPELIIRKSVKSIL</sequence>
<keyword id="KW-0238">DNA-binding</keyword>
<keyword id="KW-0658">Purine biosynthesis</keyword>
<keyword id="KW-0678">Repressor</keyword>
<keyword id="KW-0804">Transcription</keyword>
<keyword id="KW-0805">Transcription regulation</keyword>
<comment type="function">
    <text evidence="1">Is the main repressor of the genes involved in the de novo synthesis of purine nucleotides, regulating purB, purC, purEK, purF, purHD, purL, purMN and guaBA expression. PurR is allosterically activated to bind its cognate DNA by binding the purine corepressors, hypoxanthine or guanine, thereby effecting transcription repression.</text>
</comment>
<comment type="pathway">
    <text>Purine metabolism; purine nucleotide biosynthesis [regulation].</text>
</comment>
<comment type="subunit">
    <text evidence="1">Homodimer.</text>
</comment>
<comment type="domain">
    <text evidence="1">Consists of two structural and functional domains: an N-terminal DNA-binding domain, approximately the first 60 residues, and a larger C-terminal domain, approximately 280 residues, which imparts the function of corepressor binding and oligomerization.</text>
</comment>
<reference key="1">
    <citation type="journal article" date="2005" name="J. Bacteriol.">
        <title>Genomic sequence of an otitis media isolate of nontypeable Haemophilus influenzae: comparative study with H. influenzae serotype d, strain KW20.</title>
        <authorList>
            <person name="Harrison A."/>
            <person name="Dyer D.W."/>
            <person name="Gillaspy A."/>
            <person name="Ray W.C."/>
            <person name="Mungur R."/>
            <person name="Carson M.B."/>
            <person name="Zhong H."/>
            <person name="Gipson J."/>
            <person name="Gipson M."/>
            <person name="Johnson L.S."/>
            <person name="Lewis L."/>
            <person name="Bakaletz L.O."/>
            <person name="Munson R.S. Jr."/>
        </authorList>
    </citation>
    <scope>NUCLEOTIDE SEQUENCE [LARGE SCALE GENOMIC DNA]</scope>
    <source>
        <strain>86-028NP</strain>
    </source>
</reference>
<gene>
    <name evidence="1" type="primary">purR</name>
    <name type="ordered locus">NTHI1404</name>
</gene>
<name>PURR_HAEI8</name>
<organism>
    <name type="scientific">Haemophilus influenzae (strain 86-028NP)</name>
    <dbReference type="NCBI Taxonomy" id="281310"/>
    <lineage>
        <taxon>Bacteria</taxon>
        <taxon>Pseudomonadati</taxon>
        <taxon>Pseudomonadota</taxon>
        <taxon>Gammaproteobacteria</taxon>
        <taxon>Pasteurellales</taxon>
        <taxon>Pasteurellaceae</taxon>
        <taxon>Haemophilus</taxon>
    </lineage>
</organism>